<keyword id="KW-0056">Arginine metabolism</keyword>
<keyword id="KW-0963">Cytoplasm</keyword>
<keyword id="KW-0808">Transferase</keyword>
<dbReference type="EC" id="2.1.3.3" evidence="2"/>
<dbReference type="EMBL" id="CP000936">
    <property type="protein sequence ID" value="ACA37384.1"/>
    <property type="molecule type" value="Genomic_DNA"/>
</dbReference>
<dbReference type="SMR" id="B1I9W1"/>
<dbReference type="KEGG" id="spv:SPH_2341"/>
<dbReference type="HOGENOM" id="CLU_043846_3_1_9"/>
<dbReference type="UniPathway" id="UPA00254">
    <property type="reaction ID" value="UER00365"/>
</dbReference>
<dbReference type="Proteomes" id="UP000002163">
    <property type="component" value="Chromosome"/>
</dbReference>
<dbReference type="GO" id="GO:0005737">
    <property type="term" value="C:cytoplasm"/>
    <property type="evidence" value="ECO:0007669"/>
    <property type="project" value="UniProtKB-SubCell"/>
</dbReference>
<dbReference type="GO" id="GO:0016597">
    <property type="term" value="F:amino acid binding"/>
    <property type="evidence" value="ECO:0007669"/>
    <property type="project" value="InterPro"/>
</dbReference>
<dbReference type="GO" id="GO:0004585">
    <property type="term" value="F:ornithine carbamoyltransferase activity"/>
    <property type="evidence" value="ECO:0007669"/>
    <property type="project" value="UniProtKB-UniRule"/>
</dbReference>
<dbReference type="GO" id="GO:0042450">
    <property type="term" value="P:arginine biosynthetic process via ornithine"/>
    <property type="evidence" value="ECO:0007669"/>
    <property type="project" value="TreeGrafter"/>
</dbReference>
<dbReference type="GO" id="GO:0019547">
    <property type="term" value="P:arginine catabolic process to ornithine"/>
    <property type="evidence" value="ECO:0007669"/>
    <property type="project" value="UniProtKB-UniRule"/>
</dbReference>
<dbReference type="GO" id="GO:0019240">
    <property type="term" value="P:citrulline biosynthetic process"/>
    <property type="evidence" value="ECO:0007669"/>
    <property type="project" value="TreeGrafter"/>
</dbReference>
<dbReference type="FunFam" id="3.40.50.1370:FF:000004">
    <property type="entry name" value="Ornithine carbamoyltransferase"/>
    <property type="match status" value="1"/>
</dbReference>
<dbReference type="Gene3D" id="3.40.50.1370">
    <property type="entry name" value="Aspartate/ornithine carbamoyltransferase"/>
    <property type="match status" value="2"/>
</dbReference>
<dbReference type="HAMAP" id="MF_01109">
    <property type="entry name" value="OTCase"/>
    <property type="match status" value="1"/>
</dbReference>
<dbReference type="InterPro" id="IPR006132">
    <property type="entry name" value="Asp/Orn_carbamoyltranf_P-bd"/>
</dbReference>
<dbReference type="InterPro" id="IPR006130">
    <property type="entry name" value="Asp/Orn_carbamoylTrfase"/>
</dbReference>
<dbReference type="InterPro" id="IPR036901">
    <property type="entry name" value="Asp/Orn_carbamoylTrfase_sf"/>
</dbReference>
<dbReference type="InterPro" id="IPR006131">
    <property type="entry name" value="Asp_carbamoyltransf_Asp/Orn-bd"/>
</dbReference>
<dbReference type="InterPro" id="IPR002292">
    <property type="entry name" value="Orn/put_carbamltrans"/>
</dbReference>
<dbReference type="InterPro" id="IPR024904">
    <property type="entry name" value="OTCase_ArgI"/>
</dbReference>
<dbReference type="NCBIfam" id="TIGR00658">
    <property type="entry name" value="orni_carb_tr"/>
    <property type="match status" value="1"/>
</dbReference>
<dbReference type="NCBIfam" id="NF001986">
    <property type="entry name" value="PRK00779.1"/>
    <property type="match status" value="1"/>
</dbReference>
<dbReference type="PANTHER" id="PTHR45753:SF1">
    <property type="entry name" value="ORNITHINE CARBAMOYLTRANSFERASE, CATABOLIC"/>
    <property type="match status" value="1"/>
</dbReference>
<dbReference type="PANTHER" id="PTHR45753">
    <property type="entry name" value="ORNITHINE CARBAMOYLTRANSFERASE, MITOCHONDRIAL"/>
    <property type="match status" value="1"/>
</dbReference>
<dbReference type="Pfam" id="PF00185">
    <property type="entry name" value="OTCace"/>
    <property type="match status" value="1"/>
</dbReference>
<dbReference type="Pfam" id="PF02729">
    <property type="entry name" value="OTCace_N"/>
    <property type="match status" value="1"/>
</dbReference>
<dbReference type="PRINTS" id="PR00100">
    <property type="entry name" value="AOTCASE"/>
</dbReference>
<dbReference type="PRINTS" id="PR00102">
    <property type="entry name" value="OTCASE"/>
</dbReference>
<dbReference type="SUPFAM" id="SSF53671">
    <property type="entry name" value="Aspartate/ornithine carbamoyltransferase"/>
    <property type="match status" value="1"/>
</dbReference>
<dbReference type="PROSITE" id="PS00097">
    <property type="entry name" value="CARBAMOYLTRANSFERASE"/>
    <property type="match status" value="1"/>
</dbReference>
<sequence>MTNSVFQGRSFLAEKDFTRAELEYLIGLSAHLKDLKKRNIQHHYLAGKNIALLFEKTSTRTRAAFTTAAIDLGAHPEYLGANDIQLGKKESTEDTAKVLGRMFDGIEFRGFSQRMVEELAEFSGVPVWNGLTDEWHPTQMLADYLTVQENFGRLEGLTLVYCGDGRNNVANSLLVTGAILGVNVHIFSPKELFPEKEIVELAEGFAKESGAHVLITEDADEAVKDADVLYTDVWVSMGEEDKFAERVALLKPYQVNMDLVKKAGNENLIFLHCLPAFHDTHTVYGKDVAEKFGVEEMEVTDEVFRSKYARHFDQAENRMHTIKAVMAATLGNLYIPKV</sequence>
<protein>
    <recommendedName>
        <fullName evidence="2">Ornithine carbamoyltransferase</fullName>
        <shortName evidence="2">OTCase</shortName>
        <ecNumber evidence="2">2.1.3.3</ecNumber>
    </recommendedName>
</protein>
<gene>
    <name evidence="2" type="primary">arcB</name>
    <name type="ordered locus">SPH_2341</name>
</gene>
<organism>
    <name type="scientific">Streptococcus pneumoniae (strain Hungary19A-6)</name>
    <dbReference type="NCBI Taxonomy" id="487214"/>
    <lineage>
        <taxon>Bacteria</taxon>
        <taxon>Bacillati</taxon>
        <taxon>Bacillota</taxon>
        <taxon>Bacilli</taxon>
        <taxon>Lactobacillales</taxon>
        <taxon>Streptococcaceae</taxon>
        <taxon>Streptococcus</taxon>
    </lineage>
</organism>
<reference key="1">
    <citation type="journal article" date="2010" name="Genome Biol.">
        <title>Structure and dynamics of the pan-genome of Streptococcus pneumoniae and closely related species.</title>
        <authorList>
            <person name="Donati C."/>
            <person name="Hiller N.L."/>
            <person name="Tettelin H."/>
            <person name="Muzzi A."/>
            <person name="Croucher N.J."/>
            <person name="Angiuoli S.V."/>
            <person name="Oggioni M."/>
            <person name="Dunning Hotopp J.C."/>
            <person name="Hu F.Z."/>
            <person name="Riley D.R."/>
            <person name="Covacci A."/>
            <person name="Mitchell T.J."/>
            <person name="Bentley S.D."/>
            <person name="Kilian M."/>
            <person name="Ehrlich G.D."/>
            <person name="Rappuoli R."/>
            <person name="Moxon E.R."/>
            <person name="Masignani V."/>
        </authorList>
    </citation>
    <scope>NUCLEOTIDE SEQUENCE [LARGE SCALE GENOMIC DNA]</scope>
    <source>
        <strain>Hungary19A-6</strain>
    </source>
</reference>
<comment type="function">
    <text evidence="1">Reversibly catalyzes the transfer of the carbamoyl group from carbamoyl phosphate (CP) to the N(epsilon) atom of ornithine (ORN) to produce L-citrulline.</text>
</comment>
<comment type="catalytic activity">
    <reaction evidence="2">
        <text>carbamoyl phosphate + L-ornithine = L-citrulline + phosphate + H(+)</text>
        <dbReference type="Rhea" id="RHEA:19513"/>
        <dbReference type="ChEBI" id="CHEBI:15378"/>
        <dbReference type="ChEBI" id="CHEBI:43474"/>
        <dbReference type="ChEBI" id="CHEBI:46911"/>
        <dbReference type="ChEBI" id="CHEBI:57743"/>
        <dbReference type="ChEBI" id="CHEBI:58228"/>
        <dbReference type="EC" id="2.1.3.3"/>
    </reaction>
</comment>
<comment type="pathway">
    <text evidence="2">Amino-acid degradation; L-arginine degradation via ADI pathway; carbamoyl phosphate from L-arginine: step 2/2.</text>
</comment>
<comment type="subcellular location">
    <subcellularLocation>
        <location evidence="2">Cytoplasm</location>
    </subcellularLocation>
</comment>
<comment type="similarity">
    <text evidence="2">Belongs to the aspartate/ornithine carbamoyltransferase superfamily. OTCase family.</text>
</comment>
<accession>B1I9W1</accession>
<proteinExistence type="inferred from homology"/>
<name>OTC_STRPI</name>
<evidence type="ECO:0000250" key="1"/>
<evidence type="ECO:0000255" key="2">
    <source>
        <dbReference type="HAMAP-Rule" id="MF_01109"/>
    </source>
</evidence>
<feature type="chain" id="PRO_1000137106" description="Ornithine carbamoyltransferase">
    <location>
        <begin position="1"/>
        <end position="338"/>
    </location>
</feature>
<feature type="binding site" evidence="2">
    <location>
        <begin position="58"/>
        <end position="61"/>
    </location>
    <ligand>
        <name>carbamoyl phosphate</name>
        <dbReference type="ChEBI" id="CHEBI:58228"/>
    </ligand>
</feature>
<feature type="binding site" evidence="2">
    <location>
        <position position="85"/>
    </location>
    <ligand>
        <name>carbamoyl phosphate</name>
        <dbReference type="ChEBI" id="CHEBI:58228"/>
    </ligand>
</feature>
<feature type="binding site" evidence="2">
    <location>
        <position position="109"/>
    </location>
    <ligand>
        <name>carbamoyl phosphate</name>
        <dbReference type="ChEBI" id="CHEBI:58228"/>
    </ligand>
</feature>
<feature type="binding site" evidence="2">
    <location>
        <begin position="136"/>
        <end position="139"/>
    </location>
    <ligand>
        <name>carbamoyl phosphate</name>
        <dbReference type="ChEBI" id="CHEBI:58228"/>
    </ligand>
</feature>
<feature type="binding site" evidence="2">
    <location>
        <position position="168"/>
    </location>
    <ligand>
        <name>L-ornithine</name>
        <dbReference type="ChEBI" id="CHEBI:46911"/>
    </ligand>
</feature>
<feature type="binding site" evidence="2">
    <location>
        <position position="232"/>
    </location>
    <ligand>
        <name>L-ornithine</name>
        <dbReference type="ChEBI" id="CHEBI:46911"/>
    </ligand>
</feature>
<feature type="binding site" evidence="2">
    <location>
        <begin position="236"/>
        <end position="237"/>
    </location>
    <ligand>
        <name>L-ornithine</name>
        <dbReference type="ChEBI" id="CHEBI:46911"/>
    </ligand>
</feature>
<feature type="binding site" evidence="2">
    <location>
        <begin position="273"/>
        <end position="274"/>
    </location>
    <ligand>
        <name>carbamoyl phosphate</name>
        <dbReference type="ChEBI" id="CHEBI:58228"/>
    </ligand>
</feature>
<feature type="binding site" evidence="2">
    <location>
        <position position="318"/>
    </location>
    <ligand>
        <name>carbamoyl phosphate</name>
        <dbReference type="ChEBI" id="CHEBI:58228"/>
    </ligand>
</feature>